<organism>
    <name type="scientific">Debaryomyces hansenii (strain ATCC 36239 / CBS 767 / BCRC 21394 / JCM 1990 / NBRC 0083 / IGC 2968)</name>
    <name type="common">Yeast</name>
    <name type="synonym">Torulaspora hansenii</name>
    <dbReference type="NCBI Taxonomy" id="284592"/>
    <lineage>
        <taxon>Eukaryota</taxon>
        <taxon>Fungi</taxon>
        <taxon>Dikarya</taxon>
        <taxon>Ascomycota</taxon>
        <taxon>Saccharomycotina</taxon>
        <taxon>Pichiomycetes</taxon>
        <taxon>Debaryomycetaceae</taxon>
        <taxon>Debaryomyces</taxon>
    </lineage>
</organism>
<dbReference type="EMBL" id="CR382139">
    <property type="protein sequence ID" value="CAG90575.2"/>
    <property type="molecule type" value="Genomic_DNA"/>
</dbReference>
<dbReference type="RefSeq" id="XP_462089.2">
    <property type="nucleotide sequence ID" value="XM_462089.1"/>
</dbReference>
<dbReference type="SMR" id="Q6BI82"/>
<dbReference type="FunCoup" id="Q6BI82">
    <property type="interactions" value="262"/>
</dbReference>
<dbReference type="STRING" id="284592.Q6BI82"/>
<dbReference type="GeneID" id="2905001"/>
<dbReference type="KEGG" id="dha:DEHA2G12716g"/>
<dbReference type="VEuPathDB" id="FungiDB:DEHA2G12716g"/>
<dbReference type="eggNOG" id="ENOG502QSEY">
    <property type="taxonomic scope" value="Eukaryota"/>
</dbReference>
<dbReference type="HOGENOM" id="CLU_006174_0_1_1"/>
<dbReference type="InParanoid" id="Q6BI82"/>
<dbReference type="OMA" id="HDWMLAR"/>
<dbReference type="OrthoDB" id="5364245at2759"/>
<dbReference type="Proteomes" id="UP000000599">
    <property type="component" value="Chromosome G"/>
</dbReference>
<dbReference type="GO" id="GO:0035267">
    <property type="term" value="C:NuA4 histone acetyltransferase complex"/>
    <property type="evidence" value="ECO:0007669"/>
    <property type="project" value="TreeGrafter"/>
</dbReference>
<dbReference type="GO" id="GO:0005634">
    <property type="term" value="C:nucleus"/>
    <property type="evidence" value="ECO:0007669"/>
    <property type="project" value="UniProtKB-SubCell"/>
</dbReference>
<dbReference type="GO" id="GO:0003682">
    <property type="term" value="F:chromatin binding"/>
    <property type="evidence" value="ECO:0007669"/>
    <property type="project" value="TreeGrafter"/>
</dbReference>
<dbReference type="GO" id="GO:0006325">
    <property type="term" value="P:chromatin organization"/>
    <property type="evidence" value="ECO:0007669"/>
    <property type="project" value="UniProtKB-KW"/>
</dbReference>
<dbReference type="GO" id="GO:0006281">
    <property type="term" value="P:DNA repair"/>
    <property type="evidence" value="ECO:0007669"/>
    <property type="project" value="UniProtKB-KW"/>
</dbReference>
<dbReference type="CDD" id="cd00167">
    <property type="entry name" value="SANT"/>
    <property type="match status" value="1"/>
</dbReference>
<dbReference type="FunFam" id="1.10.10.60:FF:000484">
    <property type="entry name" value="Chromatin modification-related protein EAF1"/>
    <property type="match status" value="1"/>
</dbReference>
<dbReference type="Gene3D" id="1.10.10.60">
    <property type="entry name" value="Homeodomain-like"/>
    <property type="match status" value="1"/>
</dbReference>
<dbReference type="InterPro" id="IPR009057">
    <property type="entry name" value="Homeodomain-like_sf"/>
</dbReference>
<dbReference type="InterPro" id="IPR014012">
    <property type="entry name" value="HSA_dom"/>
</dbReference>
<dbReference type="InterPro" id="IPR001005">
    <property type="entry name" value="SANT/Myb"/>
</dbReference>
<dbReference type="PANTHER" id="PTHR46459:SF1">
    <property type="entry name" value="E1A-BINDING PROTEIN P400"/>
    <property type="match status" value="1"/>
</dbReference>
<dbReference type="PANTHER" id="PTHR46459">
    <property type="entry name" value="E1A-BINDING PROTEIN P400-RELATED"/>
    <property type="match status" value="1"/>
</dbReference>
<dbReference type="Pfam" id="PF07529">
    <property type="entry name" value="HSA"/>
    <property type="match status" value="1"/>
</dbReference>
<dbReference type="Pfam" id="PF13921">
    <property type="entry name" value="Myb_DNA-bind_6"/>
    <property type="match status" value="1"/>
</dbReference>
<dbReference type="SMART" id="SM00573">
    <property type="entry name" value="HSA"/>
    <property type="match status" value="1"/>
</dbReference>
<dbReference type="SMART" id="SM00717">
    <property type="entry name" value="SANT"/>
    <property type="match status" value="1"/>
</dbReference>
<dbReference type="SUPFAM" id="SSF46689">
    <property type="entry name" value="Homeodomain-like"/>
    <property type="match status" value="1"/>
</dbReference>
<dbReference type="PROSITE" id="PS51204">
    <property type="entry name" value="HSA"/>
    <property type="match status" value="1"/>
</dbReference>
<dbReference type="PROSITE" id="PS50090">
    <property type="entry name" value="MYB_LIKE"/>
    <property type="match status" value="1"/>
</dbReference>
<protein>
    <recommendedName>
        <fullName>Chromatin modification-related protein EAF1</fullName>
    </recommendedName>
    <alternativeName>
        <fullName>ESA1-associated factor 1</fullName>
    </alternativeName>
    <alternativeName>
        <fullName>Vacuolar import and degradation protein 21</fullName>
    </alternativeName>
</protein>
<comment type="function">
    <text evidence="1">Component of the NuA4 histone acetyltransferase complex which is involved in transcriptional activation of selected genes principally by acetylation of nucleosomal histone H4 and H2A. The NuA4 complex is also involved in DNA repair (By similarity).</text>
</comment>
<comment type="subunit">
    <text evidence="1">Component of the NuA4 histone acetyltransferase complex.</text>
</comment>
<comment type="subcellular location">
    <subcellularLocation>
        <location evidence="5">Nucleus</location>
    </subcellularLocation>
</comment>
<comment type="similarity">
    <text evidence="5">Belongs to the EAF1 family.</text>
</comment>
<sequence length="1193" mass="133415">MMIKEEAEGILKQRNSKLEELLHLAADPLLTDISSHKSRVSEFLNDNDITKEKTFVVSSLPGVSGSGSFAEAMSQSVSKSIYKVEEAKERTENAAIEQGLKRRTESISDDRKLKISRKSSSQLSDSRSGSISKSTSEITKPVAPPVKSQKENIHLETKDFLNRDIGELEILSVPEHYPTKPPNVSSLAELYYLTQTLPLIKLLPGSHKTLITENYELALLEGKIAVLYSRIEELKRQGKWSLRQPKRYYDPYIYTKSNNGKKTFHGDSLLEEGKWMAADFKEGSKYKKACCVTMAQAVNDYWTYGKVMCIRRKRIWHIGERREEEEIHGDLETDLVDGADSMAIDDINVDNDCAPLEITGNELQNIVVSDDKVSTEPISNDEPQRKEEDDIDSAEVADQEVSEDPSQDKPVDELIPEEEVELSSIDVKLLLSRPKPEDEIVPTNLPTFSEDDLKEMGRDSKDSAPFKLHANLNDLKKIDQSIIKNLPKFTAFDNEDSNMPAPALKPVDSPMIAVSRLLHPFEEDDEWYKIVLKEGDSHKSKSNVSSGPPEYQKGLFGFQSHRRFNYLKPPKPPLIKNIEFRSPTIWLPQDDKHLIHYVAEFCFNWDLISEHLSPSAATLRKYESNIERRTPWQCFERYIQLNEKFQFSDMKGIYSYQAQSWLEHAHRAQSTTKRRISPLGVGNESIQRGHRRLRWASLFDAMRKSMKKREDAIAKLNHRRTPVDYSANNTNVNSPEASNNGTPGPNNGKRPMDRVPTPAELSKLKFERDKSIQEAYLNQQATRSRMIAAVAQQQKQQQNNQGNIPRPPSQGPGPNVGVPPPQRGQIGVQGGPTNTPTGSLGNQVPPSQQPSQAAQGGMTKRPTTPNGTAYTAEQIQQLLQIQKQRRLMQQQNQPGKTGISPSQPNTPALMQNMPLSSNKTTVGGSNMPLSGMPNSTQQVSLSQQGQKQQLGPSQRQQVPVSQPSQGQGSSTGVPANKSRIHFAPAQVSAIINSIQTKNPNLTKEQVTKLAATYLANIQQQQQNRANQQQQQPPSQHSGAIGQGPAAHRPGQSQSPSNQKKPQVATLTPQERNQLQMLKAAKTAQQQQLQHQQQQQQQQQQQQQQQQQRRPGSPMVPNAPLDPNNMAKLEYEQRKNLLIQKHQQQQRLGNNSNIPGQSTPNLASMPPSSSSSPSSSVSGPASNLPNSNKNVPKK</sequence>
<accession>Q6BI82</accession>
<keyword id="KW-0010">Activator</keyword>
<keyword id="KW-0156">Chromatin regulator</keyword>
<keyword id="KW-0227">DNA damage</keyword>
<keyword id="KW-0234">DNA repair</keyword>
<keyword id="KW-0539">Nucleus</keyword>
<keyword id="KW-1185">Reference proteome</keyword>
<keyword id="KW-0804">Transcription</keyword>
<keyword id="KW-0805">Transcription regulation</keyword>
<proteinExistence type="inferred from homology"/>
<name>EAF1_DEBHA</name>
<feature type="chain" id="PRO_0000065817" description="Chromatin modification-related protein EAF1">
    <location>
        <begin position="1"/>
        <end position="1193"/>
    </location>
</feature>
<feature type="domain" description="HSA" evidence="3">
    <location>
        <begin position="253"/>
        <end position="332"/>
    </location>
</feature>
<feature type="domain" description="Myb-like" evidence="2">
    <location>
        <begin position="586"/>
        <end position="642"/>
    </location>
</feature>
<feature type="region of interest" description="Disordered" evidence="4">
    <location>
        <begin position="92"/>
        <end position="147"/>
    </location>
</feature>
<feature type="region of interest" description="Disordered" evidence="4">
    <location>
        <begin position="368"/>
        <end position="414"/>
    </location>
</feature>
<feature type="region of interest" description="Disordered" evidence="4">
    <location>
        <begin position="716"/>
        <end position="756"/>
    </location>
</feature>
<feature type="region of interest" description="Disordered" evidence="4">
    <location>
        <begin position="787"/>
        <end position="867"/>
    </location>
</feature>
<feature type="region of interest" description="Disordered" evidence="4">
    <location>
        <begin position="885"/>
        <end position="976"/>
    </location>
</feature>
<feature type="region of interest" description="Disordered" evidence="4">
    <location>
        <begin position="1020"/>
        <end position="1193"/>
    </location>
</feature>
<feature type="compositionally biased region" description="Basic and acidic residues" evidence="4">
    <location>
        <begin position="99"/>
        <end position="113"/>
    </location>
</feature>
<feature type="compositionally biased region" description="Low complexity" evidence="4">
    <location>
        <begin position="118"/>
        <end position="132"/>
    </location>
</feature>
<feature type="compositionally biased region" description="Acidic residues" evidence="4">
    <location>
        <begin position="389"/>
        <end position="405"/>
    </location>
</feature>
<feature type="compositionally biased region" description="Polar residues" evidence="4">
    <location>
        <begin position="726"/>
        <end position="745"/>
    </location>
</feature>
<feature type="compositionally biased region" description="Low complexity" evidence="4">
    <location>
        <begin position="792"/>
        <end position="803"/>
    </location>
</feature>
<feature type="compositionally biased region" description="Pro residues" evidence="4">
    <location>
        <begin position="805"/>
        <end position="822"/>
    </location>
</feature>
<feature type="compositionally biased region" description="Polar residues" evidence="4">
    <location>
        <begin position="831"/>
        <end position="844"/>
    </location>
</feature>
<feature type="compositionally biased region" description="Low complexity" evidence="4">
    <location>
        <begin position="845"/>
        <end position="855"/>
    </location>
</feature>
<feature type="compositionally biased region" description="Polar residues" evidence="4">
    <location>
        <begin position="899"/>
        <end position="934"/>
    </location>
</feature>
<feature type="compositionally biased region" description="Low complexity" evidence="4">
    <location>
        <begin position="935"/>
        <end position="974"/>
    </location>
</feature>
<feature type="compositionally biased region" description="Low complexity" evidence="4">
    <location>
        <begin position="1020"/>
        <end position="1035"/>
    </location>
</feature>
<feature type="compositionally biased region" description="Low complexity" evidence="4">
    <location>
        <begin position="1051"/>
        <end position="1062"/>
    </location>
</feature>
<feature type="compositionally biased region" description="Polar residues" evidence="4">
    <location>
        <begin position="1064"/>
        <end position="1075"/>
    </location>
</feature>
<feature type="compositionally biased region" description="Low complexity" evidence="4">
    <location>
        <begin position="1084"/>
        <end position="1107"/>
    </location>
</feature>
<feature type="compositionally biased region" description="Polar residues" evidence="4">
    <location>
        <begin position="1140"/>
        <end position="1161"/>
    </location>
</feature>
<feature type="compositionally biased region" description="Low complexity" evidence="4">
    <location>
        <begin position="1163"/>
        <end position="1181"/>
    </location>
</feature>
<feature type="compositionally biased region" description="Polar residues" evidence="4">
    <location>
        <begin position="1182"/>
        <end position="1193"/>
    </location>
</feature>
<gene>
    <name type="primary">EAF1</name>
    <name type="synonym">VID21</name>
    <name type="ordered locus">DEHA2G12716g</name>
</gene>
<evidence type="ECO:0000250" key="1"/>
<evidence type="ECO:0000255" key="2">
    <source>
        <dbReference type="PROSITE-ProRule" id="PRU00133"/>
    </source>
</evidence>
<evidence type="ECO:0000255" key="3">
    <source>
        <dbReference type="PROSITE-ProRule" id="PRU00549"/>
    </source>
</evidence>
<evidence type="ECO:0000256" key="4">
    <source>
        <dbReference type="SAM" id="MobiDB-lite"/>
    </source>
</evidence>
<evidence type="ECO:0000305" key="5"/>
<reference key="1">
    <citation type="journal article" date="2004" name="Nature">
        <title>Genome evolution in yeasts.</title>
        <authorList>
            <person name="Dujon B."/>
            <person name="Sherman D."/>
            <person name="Fischer G."/>
            <person name="Durrens P."/>
            <person name="Casaregola S."/>
            <person name="Lafontaine I."/>
            <person name="de Montigny J."/>
            <person name="Marck C."/>
            <person name="Neuveglise C."/>
            <person name="Talla E."/>
            <person name="Goffard N."/>
            <person name="Frangeul L."/>
            <person name="Aigle M."/>
            <person name="Anthouard V."/>
            <person name="Babour A."/>
            <person name="Barbe V."/>
            <person name="Barnay S."/>
            <person name="Blanchin S."/>
            <person name="Beckerich J.-M."/>
            <person name="Beyne E."/>
            <person name="Bleykasten C."/>
            <person name="Boisrame A."/>
            <person name="Boyer J."/>
            <person name="Cattolico L."/>
            <person name="Confanioleri F."/>
            <person name="de Daruvar A."/>
            <person name="Despons L."/>
            <person name="Fabre E."/>
            <person name="Fairhead C."/>
            <person name="Ferry-Dumazet H."/>
            <person name="Groppi A."/>
            <person name="Hantraye F."/>
            <person name="Hennequin C."/>
            <person name="Jauniaux N."/>
            <person name="Joyet P."/>
            <person name="Kachouri R."/>
            <person name="Kerrest A."/>
            <person name="Koszul R."/>
            <person name="Lemaire M."/>
            <person name="Lesur I."/>
            <person name="Ma L."/>
            <person name="Muller H."/>
            <person name="Nicaud J.-M."/>
            <person name="Nikolski M."/>
            <person name="Oztas S."/>
            <person name="Ozier-Kalogeropoulos O."/>
            <person name="Pellenz S."/>
            <person name="Potier S."/>
            <person name="Richard G.-F."/>
            <person name="Straub M.-L."/>
            <person name="Suleau A."/>
            <person name="Swennen D."/>
            <person name="Tekaia F."/>
            <person name="Wesolowski-Louvel M."/>
            <person name="Westhof E."/>
            <person name="Wirth B."/>
            <person name="Zeniou-Meyer M."/>
            <person name="Zivanovic Y."/>
            <person name="Bolotin-Fukuhara M."/>
            <person name="Thierry A."/>
            <person name="Bouchier C."/>
            <person name="Caudron B."/>
            <person name="Scarpelli C."/>
            <person name="Gaillardin C."/>
            <person name="Weissenbach J."/>
            <person name="Wincker P."/>
            <person name="Souciet J.-L."/>
        </authorList>
    </citation>
    <scope>NUCLEOTIDE SEQUENCE [LARGE SCALE GENOMIC DNA]</scope>
    <source>
        <strain>ATCC 36239 / CBS 767 / BCRC 21394 / JCM 1990 / NBRC 0083 / IGC 2968</strain>
    </source>
</reference>